<evidence type="ECO:0000255" key="1">
    <source>
        <dbReference type="HAMAP-Rule" id="MF_01522"/>
    </source>
</evidence>
<evidence type="ECO:0000256" key="2">
    <source>
        <dbReference type="SAM" id="MobiDB-lite"/>
    </source>
</evidence>
<organism>
    <name type="scientific">Caulobacter vibrioides (strain NA1000 / CB15N)</name>
    <name type="common">Caulobacter crescentus</name>
    <dbReference type="NCBI Taxonomy" id="565050"/>
    <lineage>
        <taxon>Bacteria</taxon>
        <taxon>Pseudomonadati</taxon>
        <taxon>Pseudomonadota</taxon>
        <taxon>Alphaproteobacteria</taxon>
        <taxon>Caulobacterales</taxon>
        <taxon>Caulobacteraceae</taxon>
        <taxon>Caulobacter</taxon>
    </lineage>
</organism>
<reference key="1">
    <citation type="journal article" date="2010" name="J. Bacteriol.">
        <title>The genetic basis of laboratory adaptation in Caulobacter crescentus.</title>
        <authorList>
            <person name="Marks M.E."/>
            <person name="Castro-Rojas C.M."/>
            <person name="Teiling C."/>
            <person name="Du L."/>
            <person name="Kapatral V."/>
            <person name="Walunas T.L."/>
            <person name="Crosson S."/>
        </authorList>
    </citation>
    <scope>NUCLEOTIDE SEQUENCE [LARGE SCALE GENOMIC DNA]</scope>
    <source>
        <strain>NA1000 / CB15N</strain>
    </source>
</reference>
<protein>
    <recommendedName>
        <fullName evidence="1">Probable potassium transport system protein Kup</fullName>
    </recommendedName>
</protein>
<keyword id="KW-0997">Cell inner membrane</keyword>
<keyword id="KW-1003">Cell membrane</keyword>
<keyword id="KW-0406">Ion transport</keyword>
<keyword id="KW-0472">Membrane</keyword>
<keyword id="KW-0630">Potassium</keyword>
<keyword id="KW-0633">Potassium transport</keyword>
<keyword id="KW-1185">Reference proteome</keyword>
<keyword id="KW-0769">Symport</keyword>
<keyword id="KW-0812">Transmembrane</keyword>
<keyword id="KW-1133">Transmembrane helix</keyword>
<keyword id="KW-0813">Transport</keyword>
<sequence length="665" mass="71548">MASEAPHASAPDCAPASSDIPQQDGGSTNGHGHDLKGHGFFALALGSVGVVFGDIGTSPLYAFKEALAAASHDGVTRSEIFGVVSLALWALILIVTIKYVVFIMRADNKGEGGVLSLMALAQHAMGKRTTLVFVLGVAGAALFYGDAVITPAMSVLSAVEGLRTIPALEHGVTNEVVLLIATVMLLGLFFIQSRGTASVGKLFGPVCAVWFGVMFSLGLMNLAANPGILMAISPYYAVEFLAEHGLTGFIVLGAVFLTVTGVEALTADMGHFGRWPIQAAWLFFVLPCLAMNYLGQGAFALTTLETAQAAGKAMPELNWFFEMAPEALRLPLVLLAGAATVIASQAVITGAFSLTQQAIQLGLLPRLDVRRTSETQSGQIFVPQLNTMLLLGVLAIMFTFQTSSALAHAYGLAVTGTMIVTTCMAFIVMRKLWKWSMPMALLFLVPFLALDITFLSANALRFFSGGWLPVLIGAALFTIMATWVRGSQILTDKTRRDSLPVADLMDILRARAPHRAPGTAIFLTSDPDMTPVALMHNLKHNKVLHERNVILTVRTAETPRVSEEERVKIEKVNDDFKKVVVNYGFMESPNIPKALAVCRKQGLKFDIMATSFFLGRRSIVPSANSGMPLWQDRLFIYLMRNAANPTDFFKIPPGRVVELGAQVTV</sequence>
<comment type="function">
    <text evidence="1">Transport of potassium into the cell. Likely operates as a K(+):H(+) symporter.</text>
</comment>
<comment type="catalytic activity">
    <reaction evidence="1">
        <text>K(+)(in) + H(+)(in) = K(+)(out) + H(+)(out)</text>
        <dbReference type="Rhea" id="RHEA:28490"/>
        <dbReference type="ChEBI" id="CHEBI:15378"/>
        <dbReference type="ChEBI" id="CHEBI:29103"/>
    </reaction>
    <physiologicalReaction direction="right-to-left" evidence="1">
        <dbReference type="Rhea" id="RHEA:28492"/>
    </physiologicalReaction>
</comment>
<comment type="subcellular location">
    <subcellularLocation>
        <location evidence="1">Cell inner membrane</location>
        <topology evidence="1">Multi-pass membrane protein</topology>
    </subcellularLocation>
</comment>
<comment type="similarity">
    <text evidence="1">Belongs to the HAK/KUP transporter (TC 2.A.72) family.</text>
</comment>
<gene>
    <name evidence="1" type="primary">kup</name>
    <name type="ordered locus">CCNA_00130</name>
</gene>
<feature type="chain" id="PRO_1000185114" description="Probable potassium transport system protein Kup">
    <location>
        <begin position="1"/>
        <end position="665"/>
    </location>
</feature>
<feature type="transmembrane region" description="Helical" evidence="1">
    <location>
        <begin position="40"/>
        <end position="60"/>
    </location>
</feature>
<feature type="transmembrane region" description="Helical" evidence="1">
    <location>
        <begin position="83"/>
        <end position="103"/>
    </location>
</feature>
<feature type="transmembrane region" description="Helical" evidence="1">
    <location>
        <begin position="131"/>
        <end position="151"/>
    </location>
</feature>
<feature type="transmembrane region" description="Helical" evidence="1">
    <location>
        <begin position="171"/>
        <end position="191"/>
    </location>
</feature>
<feature type="transmembrane region" description="Helical" evidence="1">
    <location>
        <begin position="202"/>
        <end position="222"/>
    </location>
</feature>
<feature type="transmembrane region" description="Helical" evidence="1">
    <location>
        <begin position="245"/>
        <end position="265"/>
    </location>
</feature>
<feature type="transmembrane region" description="Helical" evidence="1">
    <location>
        <begin position="281"/>
        <end position="301"/>
    </location>
</feature>
<feature type="transmembrane region" description="Helical" evidence="1">
    <location>
        <begin position="332"/>
        <end position="352"/>
    </location>
</feature>
<feature type="transmembrane region" description="Helical" evidence="1">
    <location>
        <begin position="380"/>
        <end position="400"/>
    </location>
</feature>
<feature type="transmembrane region" description="Helical" evidence="1">
    <location>
        <begin position="409"/>
        <end position="429"/>
    </location>
</feature>
<feature type="transmembrane region" description="Helical" evidence="1">
    <location>
        <begin position="435"/>
        <end position="455"/>
    </location>
</feature>
<feature type="transmembrane region" description="Helical" evidence="1">
    <location>
        <begin position="462"/>
        <end position="482"/>
    </location>
</feature>
<feature type="region of interest" description="Disordered" evidence="2">
    <location>
        <begin position="1"/>
        <end position="31"/>
    </location>
</feature>
<feature type="compositionally biased region" description="Low complexity" evidence="2">
    <location>
        <begin position="1"/>
        <end position="18"/>
    </location>
</feature>
<proteinExistence type="inferred from homology"/>
<name>KUP_CAUVN</name>
<dbReference type="EMBL" id="CP001340">
    <property type="protein sequence ID" value="ACL93597.1"/>
    <property type="molecule type" value="Genomic_DNA"/>
</dbReference>
<dbReference type="RefSeq" id="WP_012639885.1">
    <property type="nucleotide sequence ID" value="NC_011916.1"/>
</dbReference>
<dbReference type="RefSeq" id="YP_002515505.1">
    <property type="nucleotide sequence ID" value="NC_011916.1"/>
</dbReference>
<dbReference type="GeneID" id="7332384"/>
<dbReference type="KEGG" id="ccs:CCNA_00130"/>
<dbReference type="PATRIC" id="fig|565050.3.peg.129"/>
<dbReference type="HOGENOM" id="CLU_008142_4_2_5"/>
<dbReference type="OrthoDB" id="9805577at2"/>
<dbReference type="PhylomeDB" id="B8GXM1"/>
<dbReference type="Proteomes" id="UP000001364">
    <property type="component" value="Chromosome"/>
</dbReference>
<dbReference type="GO" id="GO:0005886">
    <property type="term" value="C:plasma membrane"/>
    <property type="evidence" value="ECO:0007669"/>
    <property type="project" value="UniProtKB-SubCell"/>
</dbReference>
<dbReference type="GO" id="GO:0015079">
    <property type="term" value="F:potassium ion transmembrane transporter activity"/>
    <property type="evidence" value="ECO:0007669"/>
    <property type="project" value="UniProtKB-UniRule"/>
</dbReference>
<dbReference type="GO" id="GO:0015293">
    <property type="term" value="F:symporter activity"/>
    <property type="evidence" value="ECO:0007669"/>
    <property type="project" value="UniProtKB-UniRule"/>
</dbReference>
<dbReference type="HAMAP" id="MF_01522">
    <property type="entry name" value="Kup"/>
    <property type="match status" value="1"/>
</dbReference>
<dbReference type="InterPro" id="IPR003855">
    <property type="entry name" value="K+_transporter"/>
</dbReference>
<dbReference type="InterPro" id="IPR053952">
    <property type="entry name" value="K_trans_C"/>
</dbReference>
<dbReference type="InterPro" id="IPR053951">
    <property type="entry name" value="K_trans_N"/>
</dbReference>
<dbReference type="InterPro" id="IPR023051">
    <property type="entry name" value="Kup"/>
</dbReference>
<dbReference type="PANTHER" id="PTHR30540:SF79">
    <property type="entry name" value="LOW AFFINITY POTASSIUM TRANSPORT SYSTEM PROTEIN KUP"/>
    <property type="match status" value="1"/>
</dbReference>
<dbReference type="PANTHER" id="PTHR30540">
    <property type="entry name" value="OSMOTIC STRESS POTASSIUM TRANSPORTER"/>
    <property type="match status" value="1"/>
</dbReference>
<dbReference type="Pfam" id="PF02705">
    <property type="entry name" value="K_trans"/>
    <property type="match status" value="1"/>
</dbReference>
<dbReference type="Pfam" id="PF22776">
    <property type="entry name" value="K_trans_C"/>
    <property type="match status" value="1"/>
</dbReference>
<accession>B8GXM1</accession>